<comment type="catalytic activity">
    <reaction evidence="1">
        <text>L-glutamine + H2O = L-glutamate + NH4(+)</text>
        <dbReference type="Rhea" id="RHEA:15889"/>
        <dbReference type="ChEBI" id="CHEBI:15377"/>
        <dbReference type="ChEBI" id="CHEBI:28938"/>
        <dbReference type="ChEBI" id="CHEBI:29985"/>
        <dbReference type="ChEBI" id="CHEBI:58359"/>
        <dbReference type="EC" id="3.5.1.2"/>
    </reaction>
</comment>
<comment type="subunit">
    <text evidence="1">Homotetramer.</text>
</comment>
<comment type="similarity">
    <text evidence="1">Belongs to the glutaminase family.</text>
</comment>
<accession>Q9ZC49</accession>
<accession>Q0WFL0</accession>
<organism>
    <name type="scientific">Yersinia pestis</name>
    <dbReference type="NCBI Taxonomy" id="632"/>
    <lineage>
        <taxon>Bacteria</taxon>
        <taxon>Pseudomonadati</taxon>
        <taxon>Pseudomonadota</taxon>
        <taxon>Gammaproteobacteria</taxon>
        <taxon>Enterobacterales</taxon>
        <taxon>Yersiniaceae</taxon>
        <taxon>Yersinia</taxon>
    </lineage>
</organism>
<feature type="chain" id="PRO_0000110634" description="Glutaminase 2">
    <location>
        <begin position="1"/>
        <end position="340"/>
    </location>
</feature>
<feature type="binding site" evidence="1">
    <location>
        <position position="89"/>
    </location>
    <ligand>
        <name>substrate</name>
    </ligand>
</feature>
<feature type="binding site" evidence="1">
    <location>
        <position position="140"/>
    </location>
    <ligand>
        <name>substrate</name>
    </ligand>
</feature>
<feature type="binding site" evidence="1">
    <location>
        <position position="191"/>
    </location>
    <ligand>
        <name>substrate</name>
    </ligand>
</feature>
<feature type="binding site" evidence="1">
    <location>
        <position position="215"/>
    </location>
    <ligand>
        <name>substrate</name>
    </ligand>
</feature>
<feature type="binding site" evidence="1">
    <location>
        <position position="267"/>
    </location>
    <ligand>
        <name>substrate</name>
    </ligand>
</feature>
<proteinExistence type="inferred from homology"/>
<protein>
    <recommendedName>
        <fullName evidence="1">Glutaminase 2</fullName>
        <ecNumber evidence="1">3.5.1.2</ecNumber>
    </recommendedName>
</protein>
<name>GLSA2_YERPE</name>
<gene>
    <name evidence="1" type="primary">glsA2</name>
    <name type="ordered locus">YPO1939</name>
    <name type="ordered locus">y2372</name>
    <name type="ordered locus">YP_1682</name>
</gene>
<dbReference type="EC" id="3.5.1.2" evidence="1"/>
<dbReference type="EMBL" id="AL031866">
    <property type="protein sequence ID" value="CAA21362.1"/>
    <property type="molecule type" value="Genomic_DNA"/>
</dbReference>
<dbReference type="EMBL" id="AL590842">
    <property type="protein sequence ID" value="CAL20577.1"/>
    <property type="molecule type" value="Genomic_DNA"/>
</dbReference>
<dbReference type="EMBL" id="AE009952">
    <property type="protein sequence ID" value="AAM85930.1"/>
    <property type="molecule type" value="Genomic_DNA"/>
</dbReference>
<dbReference type="EMBL" id="AE017042">
    <property type="protein sequence ID" value="AAS61912.1"/>
    <property type="molecule type" value="Genomic_DNA"/>
</dbReference>
<dbReference type="PIR" id="AF0236">
    <property type="entry name" value="AF0236"/>
</dbReference>
<dbReference type="PIR" id="T47019">
    <property type="entry name" value="T47019"/>
</dbReference>
<dbReference type="RefSeq" id="YP_002346928.1">
    <property type="nucleotide sequence ID" value="NC_003143.1"/>
</dbReference>
<dbReference type="SMR" id="Q9ZC49"/>
<dbReference type="IntAct" id="Q9ZC49">
    <property type="interactions" value="1"/>
</dbReference>
<dbReference type="STRING" id="214092.YPO1939"/>
<dbReference type="PaxDb" id="214092-YPO1939"/>
<dbReference type="DNASU" id="1147319"/>
<dbReference type="EnsemblBacteria" id="AAS61912">
    <property type="protein sequence ID" value="AAS61912"/>
    <property type="gene ID" value="YP_1682"/>
</dbReference>
<dbReference type="KEGG" id="ype:YPO1939"/>
<dbReference type="KEGG" id="ypk:y2372"/>
<dbReference type="KEGG" id="ypm:YP_1682"/>
<dbReference type="PATRIC" id="fig|214092.21.peg.2315"/>
<dbReference type="eggNOG" id="COG2066">
    <property type="taxonomic scope" value="Bacteria"/>
</dbReference>
<dbReference type="HOGENOM" id="CLU_027932_1_0_6"/>
<dbReference type="OrthoDB" id="9788822at2"/>
<dbReference type="Proteomes" id="UP000000815">
    <property type="component" value="Chromosome"/>
</dbReference>
<dbReference type="Proteomes" id="UP000001019">
    <property type="component" value="Chromosome"/>
</dbReference>
<dbReference type="Proteomes" id="UP000002490">
    <property type="component" value="Chromosome"/>
</dbReference>
<dbReference type="GO" id="GO:0004359">
    <property type="term" value="F:glutaminase activity"/>
    <property type="evidence" value="ECO:0000318"/>
    <property type="project" value="GO_Central"/>
</dbReference>
<dbReference type="GO" id="GO:0006537">
    <property type="term" value="P:glutamate biosynthetic process"/>
    <property type="evidence" value="ECO:0000318"/>
    <property type="project" value="GO_Central"/>
</dbReference>
<dbReference type="GO" id="GO:0006543">
    <property type="term" value="P:glutamine catabolic process"/>
    <property type="evidence" value="ECO:0000318"/>
    <property type="project" value="GO_Central"/>
</dbReference>
<dbReference type="FunFam" id="3.40.710.10:FF:000109">
    <property type="entry name" value="Glutaminase"/>
    <property type="match status" value="1"/>
</dbReference>
<dbReference type="Gene3D" id="3.40.710.10">
    <property type="entry name" value="DD-peptidase/beta-lactamase superfamily"/>
    <property type="match status" value="1"/>
</dbReference>
<dbReference type="HAMAP" id="MF_00313">
    <property type="entry name" value="Glutaminase"/>
    <property type="match status" value="1"/>
</dbReference>
<dbReference type="InterPro" id="IPR012338">
    <property type="entry name" value="Beta-lactam/transpept-like"/>
</dbReference>
<dbReference type="InterPro" id="IPR015868">
    <property type="entry name" value="Glutaminase"/>
</dbReference>
<dbReference type="NCBIfam" id="TIGR03814">
    <property type="entry name" value="Gln_ase"/>
    <property type="match status" value="1"/>
</dbReference>
<dbReference type="NCBIfam" id="NF009020">
    <property type="entry name" value="PRK12356.1"/>
    <property type="match status" value="1"/>
</dbReference>
<dbReference type="PANTHER" id="PTHR12544">
    <property type="entry name" value="GLUTAMINASE"/>
    <property type="match status" value="1"/>
</dbReference>
<dbReference type="PANTHER" id="PTHR12544:SF48">
    <property type="entry name" value="GLUTAMINASE 1"/>
    <property type="match status" value="1"/>
</dbReference>
<dbReference type="Pfam" id="PF04960">
    <property type="entry name" value="Glutaminase"/>
    <property type="match status" value="1"/>
</dbReference>
<dbReference type="SUPFAM" id="SSF56601">
    <property type="entry name" value="beta-lactamase/transpeptidase-like"/>
    <property type="match status" value="1"/>
</dbReference>
<evidence type="ECO:0000255" key="1">
    <source>
        <dbReference type="HAMAP-Rule" id="MF_00313"/>
    </source>
</evidence>
<reference key="1">
    <citation type="submission" date="1998-10" db="EMBL/GenBank/DDBJ databases">
        <title>DNA sequence of the 102 kbases unstable region of Yersinia pestis.</title>
        <authorList>
            <person name="Buchrieser C."/>
            <person name="Rusniok C."/>
            <person name="Couve E."/>
            <person name="Frangeul L."/>
            <person name="Billault A."/>
            <person name="Kunst F."/>
            <person name="Carniel E."/>
            <person name="Glaser P."/>
        </authorList>
    </citation>
    <scope>NUCLEOTIDE SEQUENCE [GENOMIC DNA]</scope>
    <source>
        <strain>6/69</strain>
    </source>
</reference>
<reference key="2">
    <citation type="journal article" date="2001" name="Nature">
        <title>Genome sequence of Yersinia pestis, the causative agent of plague.</title>
        <authorList>
            <person name="Parkhill J."/>
            <person name="Wren B.W."/>
            <person name="Thomson N.R."/>
            <person name="Titball R.W."/>
            <person name="Holden M.T.G."/>
            <person name="Prentice M.B."/>
            <person name="Sebaihia M."/>
            <person name="James K.D."/>
            <person name="Churcher C.M."/>
            <person name="Mungall K.L."/>
            <person name="Baker S."/>
            <person name="Basham D."/>
            <person name="Bentley S.D."/>
            <person name="Brooks K."/>
            <person name="Cerdeno-Tarraga A.-M."/>
            <person name="Chillingworth T."/>
            <person name="Cronin A."/>
            <person name="Davies R.M."/>
            <person name="Davis P."/>
            <person name="Dougan G."/>
            <person name="Feltwell T."/>
            <person name="Hamlin N."/>
            <person name="Holroyd S."/>
            <person name="Jagels K."/>
            <person name="Karlyshev A.V."/>
            <person name="Leather S."/>
            <person name="Moule S."/>
            <person name="Oyston P.C.F."/>
            <person name="Quail M.A."/>
            <person name="Rutherford K.M."/>
            <person name="Simmonds M."/>
            <person name="Skelton J."/>
            <person name="Stevens K."/>
            <person name="Whitehead S."/>
            <person name="Barrell B.G."/>
        </authorList>
    </citation>
    <scope>NUCLEOTIDE SEQUENCE [LARGE SCALE GENOMIC DNA]</scope>
    <source>
        <strain>CO-92 / Biovar Orientalis</strain>
    </source>
</reference>
<reference key="3">
    <citation type="journal article" date="2002" name="J. Bacteriol.">
        <title>Genome sequence of Yersinia pestis KIM.</title>
        <authorList>
            <person name="Deng W."/>
            <person name="Burland V."/>
            <person name="Plunkett G. III"/>
            <person name="Boutin A."/>
            <person name="Mayhew G.F."/>
            <person name="Liss P."/>
            <person name="Perna N.T."/>
            <person name="Rose D.J."/>
            <person name="Mau B."/>
            <person name="Zhou S."/>
            <person name="Schwartz D.C."/>
            <person name="Fetherston J.D."/>
            <person name="Lindler L.E."/>
            <person name="Brubaker R.R."/>
            <person name="Plano G.V."/>
            <person name="Straley S.C."/>
            <person name="McDonough K.A."/>
            <person name="Nilles M.L."/>
            <person name="Matson J.S."/>
            <person name="Blattner F.R."/>
            <person name="Perry R.D."/>
        </authorList>
    </citation>
    <scope>NUCLEOTIDE SEQUENCE [LARGE SCALE GENOMIC DNA]</scope>
    <source>
        <strain>KIM10+ / Biovar Mediaevalis</strain>
    </source>
</reference>
<reference key="4">
    <citation type="journal article" date="2004" name="DNA Res.">
        <title>Complete genome sequence of Yersinia pestis strain 91001, an isolate avirulent to humans.</title>
        <authorList>
            <person name="Song Y."/>
            <person name="Tong Z."/>
            <person name="Wang J."/>
            <person name="Wang L."/>
            <person name="Guo Z."/>
            <person name="Han Y."/>
            <person name="Zhang J."/>
            <person name="Pei D."/>
            <person name="Zhou D."/>
            <person name="Qin H."/>
            <person name="Pang X."/>
            <person name="Han Y."/>
            <person name="Zhai J."/>
            <person name="Li M."/>
            <person name="Cui B."/>
            <person name="Qi Z."/>
            <person name="Jin L."/>
            <person name="Dai R."/>
            <person name="Chen F."/>
            <person name="Li S."/>
            <person name="Ye C."/>
            <person name="Du Z."/>
            <person name="Lin W."/>
            <person name="Wang J."/>
            <person name="Yu J."/>
            <person name="Yang H."/>
            <person name="Wang J."/>
            <person name="Huang P."/>
            <person name="Yang R."/>
        </authorList>
    </citation>
    <scope>NUCLEOTIDE SEQUENCE [LARGE SCALE GENOMIC DNA]</scope>
    <source>
        <strain>91001 / Biovar Mediaevalis</strain>
    </source>
</reference>
<sequence>MEITDMPTDDSNNGIIDYVSTGHLPDPETVVKLVQEAHKRFSTDTAGVVSNVYPALERIPADLFGICMVGTNGKIHSAGDVDYEFTIMSVSKPFVFALVCQAIGAKTAREKLGVNSTGMAFNSVTAIERASDGRTNPMVNSGAIATTSLVPGATSDEQWKFIYDGLCRFAGRELTLNEEVYQSACETNFRNRGIANVLQGYGRLGCDPIIATDLYTRQCSLNVSARDLAVMGATLADGGVNPLTRERVVDNDICHYALAVMVTAGLYETSGDWLYDIGLPGKSGIGGGIVTVSPGKGGLGTFAPLLDSAGNSIKGQLAARFLSRSLGMDMFVSEPYTEKN</sequence>
<keyword id="KW-0378">Hydrolase</keyword>
<keyword id="KW-1185">Reference proteome</keyword>